<feature type="signal peptide" evidence="2">
    <location>
        <begin position="1"/>
        <end position="18"/>
    </location>
</feature>
<feature type="chain" id="PRO_0000007381" description="Thiol:disulfide interchange protein DsbD 1">
    <location>
        <begin position="19"/>
        <end position="591"/>
    </location>
</feature>
<feature type="topological domain" description="Periplasmic" evidence="1">
    <location>
        <begin position="19"/>
        <end position="175"/>
    </location>
</feature>
<feature type="transmembrane region" description="Helical" evidence="2">
    <location>
        <begin position="176"/>
        <end position="196"/>
    </location>
</feature>
<feature type="topological domain" description="Cytoplasmic" evidence="1">
    <location>
        <begin position="197"/>
        <end position="213"/>
    </location>
</feature>
<feature type="transmembrane region" description="Helical" evidence="2">
    <location>
        <begin position="214"/>
        <end position="234"/>
    </location>
</feature>
<feature type="topological domain" description="Periplasmic" evidence="1">
    <location>
        <begin position="235"/>
        <end position="251"/>
    </location>
</feature>
<feature type="transmembrane region" description="Helical" evidence="2">
    <location>
        <begin position="252"/>
        <end position="272"/>
    </location>
</feature>
<feature type="topological domain" description="Cytoplasmic" evidence="1">
    <location>
        <begin position="273"/>
        <end position="295"/>
    </location>
</feature>
<feature type="transmembrane region" description="Helical" evidence="2">
    <location>
        <begin position="296"/>
        <end position="316"/>
    </location>
</feature>
<feature type="topological domain" description="Periplasmic" evidence="1">
    <location>
        <begin position="317"/>
        <end position="338"/>
    </location>
</feature>
<feature type="transmembrane region" description="Helical" evidence="2">
    <location>
        <begin position="339"/>
        <end position="359"/>
    </location>
</feature>
<feature type="topological domain" description="Cytoplasmic" evidence="1">
    <location>
        <begin position="360"/>
        <end position="365"/>
    </location>
</feature>
<feature type="transmembrane region" description="Helical" evidence="2">
    <location>
        <begin position="366"/>
        <end position="386"/>
    </location>
</feature>
<feature type="topological domain" description="Periplasmic" evidence="1">
    <location>
        <begin position="387"/>
        <end position="392"/>
    </location>
</feature>
<feature type="transmembrane region" description="Helical" evidence="2">
    <location>
        <begin position="393"/>
        <end position="413"/>
    </location>
</feature>
<feature type="topological domain" description="Cytoplasmic" evidence="1">
    <location>
        <begin position="414"/>
        <end position="423"/>
    </location>
</feature>
<feature type="transmembrane region" description="Helical" evidence="2">
    <location>
        <begin position="424"/>
        <end position="444"/>
    </location>
</feature>
<feature type="topological domain" description="Periplasmic" evidence="1">
    <location>
        <begin position="445"/>
        <end position="591"/>
    </location>
</feature>
<feature type="domain" description="Thioredoxin" evidence="2">
    <location>
        <begin position="452"/>
        <end position="589"/>
    </location>
</feature>
<feature type="disulfide bond" description="Redox-active" evidence="2">
    <location>
        <begin position="134"/>
        <end position="140"/>
    </location>
</feature>
<feature type="disulfide bond" description="Redox-active" evidence="2">
    <location>
        <begin position="191"/>
        <end position="313"/>
    </location>
</feature>
<feature type="disulfide bond" description="Redox-active" evidence="2">
    <location>
        <begin position="504"/>
        <end position="507"/>
    </location>
</feature>
<feature type="sequence conflict" description="In Ref. 1; AAB84084." evidence="3" ref="1">
    <location>
        <position position="19"/>
    </location>
</feature>
<feature type="sequence conflict" description="In Ref. 1; AAB84084." evidence="3" ref="1">
    <original>G</original>
    <variation>A</variation>
    <location>
        <position position="26"/>
    </location>
</feature>
<feature type="sequence conflict" description="In Ref. 1; AAB84084." evidence="3" ref="1">
    <location>
        <position position="53"/>
    </location>
</feature>
<feature type="sequence conflict" description="In Ref. 1; AAB84084." evidence="3" ref="1">
    <original>LR</original>
    <variation>C</variation>
    <location>
        <begin position="59"/>
        <end position="60"/>
    </location>
</feature>
<feature type="sequence conflict" description="In Ref. 1; AAB84084." evidence="3" ref="1">
    <original>E</original>
    <variation>A</variation>
    <location>
        <position position="65"/>
    </location>
</feature>
<feature type="sequence conflict" description="In Ref. 1; AAB84084." evidence="3" ref="1">
    <original>PA</original>
    <variation>D</variation>
    <location>
        <begin position="157"/>
        <end position="158"/>
    </location>
</feature>
<feature type="sequence conflict" description="In Ref. 1; AAB84084." evidence="3" ref="1">
    <original>S</original>
    <variation>T</variation>
    <location>
        <position position="175"/>
    </location>
</feature>
<feature type="sequence conflict" description="In Ref. 1; AAB84084." evidence="3" ref="1">
    <original>G</original>
    <variation>A</variation>
    <location>
        <position position="342"/>
    </location>
</feature>
<feature type="sequence conflict" description="In Ref. 1; AAB84084." evidence="3" ref="1">
    <original>FGA</original>
    <variation>LR</variation>
    <location>
        <begin position="352"/>
        <end position="354"/>
    </location>
</feature>
<feature type="sequence conflict" description="In Ref. 1; AAB84084." evidence="3" ref="1">
    <original>NA</original>
    <variation>T</variation>
    <location>
        <begin position="372"/>
        <end position="373"/>
    </location>
</feature>
<feature type="sequence conflict" description="In Ref. 1; AAB84084." evidence="3" ref="1">
    <original>GG</original>
    <variation>R</variation>
    <location>
        <begin position="404"/>
        <end position="405"/>
    </location>
</feature>
<feature type="sequence conflict" description="In Ref. 1; AAB84084." evidence="3" ref="1">
    <original>GESDPIHPLGRSVPSIHAGP</original>
    <variation>AGRTRSIRWAARCRRSIGA</variation>
    <location>
        <begin position="446"/>
        <end position="465"/>
    </location>
</feature>
<feature type="sequence conflict" description="In Ref. 1; AAB84084." evidence="3" ref="1">
    <original>GKP</original>
    <variation>QA</variation>
    <location>
        <begin position="492"/>
        <end position="494"/>
    </location>
</feature>
<dbReference type="EC" id="1.8.1.8" evidence="2"/>
<dbReference type="EMBL" id="AF010322">
    <property type="protein sequence ID" value="AAB84084.1"/>
    <property type="molecule type" value="Genomic_DNA"/>
</dbReference>
<dbReference type="EMBL" id="AE004091">
    <property type="protein sequence ID" value="AAG08230.1"/>
    <property type="molecule type" value="Genomic_DNA"/>
</dbReference>
<dbReference type="PIR" id="E83039">
    <property type="entry name" value="E83039"/>
</dbReference>
<dbReference type="RefSeq" id="NP_253532.1">
    <property type="nucleotide sequence ID" value="NC_002516.2"/>
</dbReference>
<dbReference type="RefSeq" id="WP_003112327.1">
    <property type="nucleotide sequence ID" value="NZ_QZGE01000002.1"/>
</dbReference>
<dbReference type="SMR" id="Q9HUW5"/>
<dbReference type="FunCoup" id="Q9HUW5">
    <property type="interactions" value="121"/>
</dbReference>
<dbReference type="STRING" id="208964.PA4845"/>
<dbReference type="PaxDb" id="208964-PA4845"/>
<dbReference type="GeneID" id="879570"/>
<dbReference type="KEGG" id="pae:PA4845"/>
<dbReference type="PATRIC" id="fig|208964.12.peg.5077"/>
<dbReference type="PseudoCAP" id="PA4845"/>
<dbReference type="HOGENOM" id="CLU_014657_3_0_6"/>
<dbReference type="InParanoid" id="Q9HUW5"/>
<dbReference type="OrthoDB" id="9811036at2"/>
<dbReference type="PhylomeDB" id="Q9HUW5"/>
<dbReference type="BioCyc" id="PAER208964:G1FZ6-4959-MONOMER"/>
<dbReference type="Proteomes" id="UP000002438">
    <property type="component" value="Chromosome"/>
</dbReference>
<dbReference type="GO" id="GO:0005886">
    <property type="term" value="C:plasma membrane"/>
    <property type="evidence" value="ECO:0007669"/>
    <property type="project" value="UniProtKB-SubCell"/>
</dbReference>
<dbReference type="GO" id="GO:0009055">
    <property type="term" value="F:electron transfer activity"/>
    <property type="evidence" value="ECO:0007669"/>
    <property type="project" value="UniProtKB-UniRule"/>
</dbReference>
<dbReference type="GO" id="GO:0047134">
    <property type="term" value="F:protein-disulfide reductase [NAD(P)H] activity"/>
    <property type="evidence" value="ECO:0007669"/>
    <property type="project" value="UniProtKB-UniRule"/>
</dbReference>
<dbReference type="GO" id="GO:0015035">
    <property type="term" value="F:protein-disulfide reductase activity"/>
    <property type="evidence" value="ECO:0000318"/>
    <property type="project" value="GO_Central"/>
</dbReference>
<dbReference type="GO" id="GO:0045454">
    <property type="term" value="P:cell redox homeostasis"/>
    <property type="evidence" value="ECO:0000318"/>
    <property type="project" value="GO_Central"/>
</dbReference>
<dbReference type="GO" id="GO:0017004">
    <property type="term" value="P:cytochrome complex assembly"/>
    <property type="evidence" value="ECO:0007669"/>
    <property type="project" value="UniProtKB-UniRule"/>
</dbReference>
<dbReference type="CDD" id="cd02953">
    <property type="entry name" value="DsbDgamma"/>
    <property type="match status" value="1"/>
</dbReference>
<dbReference type="Gene3D" id="3.40.30.10">
    <property type="entry name" value="Glutaredoxin"/>
    <property type="match status" value="1"/>
</dbReference>
<dbReference type="Gene3D" id="2.60.40.1250">
    <property type="entry name" value="Thiol:disulfide interchange protein DsbD, N-terminal domain"/>
    <property type="match status" value="1"/>
</dbReference>
<dbReference type="HAMAP" id="MF_00399">
    <property type="entry name" value="DbsD"/>
    <property type="match status" value="1"/>
</dbReference>
<dbReference type="InterPro" id="IPR003834">
    <property type="entry name" value="Cyt_c_assmbl_TM_dom"/>
</dbReference>
<dbReference type="InterPro" id="IPR035671">
    <property type="entry name" value="DsbD_gamma"/>
</dbReference>
<dbReference type="InterPro" id="IPR028250">
    <property type="entry name" value="DsbDN"/>
</dbReference>
<dbReference type="InterPro" id="IPR036929">
    <property type="entry name" value="DsbDN_sf"/>
</dbReference>
<dbReference type="InterPro" id="IPR022910">
    <property type="entry name" value="Thiol_diS_interchange_DbsD"/>
</dbReference>
<dbReference type="InterPro" id="IPR036249">
    <property type="entry name" value="Thioredoxin-like_sf"/>
</dbReference>
<dbReference type="InterPro" id="IPR013766">
    <property type="entry name" value="Thioredoxin_domain"/>
</dbReference>
<dbReference type="NCBIfam" id="NF001419">
    <property type="entry name" value="PRK00293.1"/>
    <property type="match status" value="1"/>
</dbReference>
<dbReference type="PANTHER" id="PTHR32234">
    <property type="entry name" value="THIOL:DISULFIDE INTERCHANGE PROTEIN DSBD"/>
    <property type="match status" value="1"/>
</dbReference>
<dbReference type="PANTHER" id="PTHR32234:SF0">
    <property type="entry name" value="THIOL:DISULFIDE INTERCHANGE PROTEIN DSBD"/>
    <property type="match status" value="1"/>
</dbReference>
<dbReference type="Pfam" id="PF11412">
    <property type="entry name" value="DsbD_N"/>
    <property type="match status" value="1"/>
</dbReference>
<dbReference type="Pfam" id="PF02683">
    <property type="entry name" value="DsbD_TM"/>
    <property type="match status" value="1"/>
</dbReference>
<dbReference type="Pfam" id="PF13899">
    <property type="entry name" value="Thioredoxin_7"/>
    <property type="match status" value="1"/>
</dbReference>
<dbReference type="SUPFAM" id="SSF74863">
    <property type="entry name" value="Thiol:disulfide interchange protein DsbD, N-terminal domain (DsbD-alpha)"/>
    <property type="match status" value="1"/>
</dbReference>
<dbReference type="SUPFAM" id="SSF52833">
    <property type="entry name" value="Thioredoxin-like"/>
    <property type="match status" value="1"/>
</dbReference>
<dbReference type="PROSITE" id="PS51352">
    <property type="entry name" value="THIOREDOXIN_2"/>
    <property type="match status" value="1"/>
</dbReference>
<protein>
    <recommendedName>
        <fullName evidence="2">Thiol:disulfide interchange protein DsbD 1</fullName>
        <ecNumber evidence="2">1.8.1.8</ecNumber>
    </recommendedName>
    <alternativeName>
        <fullName evidence="2">Protein-disulfide reductase 1</fullName>
        <shortName evidence="2">Disulfide reductase 1</shortName>
    </alternativeName>
</protein>
<gene>
    <name evidence="2" type="primary">dsbD1</name>
    <name type="synonym">dipZ</name>
    <name type="ordered locus">PA4845</name>
</gene>
<accession>Q9HUW5</accession>
<accession>O30556</accession>
<reference key="1">
    <citation type="journal article" date="1997" name="Microbiology">
        <title>Disruption of the Pseudomonas aeruginosa dipZ gene, encoding a putative protein-disulfide reductase, leads to partial pleiotropic deficiency in c-type cytochrome biogenesis.</title>
        <authorList>
            <person name="Page M.D."/>
            <person name="Saunders N.F.W."/>
            <person name="Ferguson S.J."/>
        </authorList>
    </citation>
    <scope>NUCLEOTIDE SEQUENCE [GENOMIC DNA]</scope>
    <source>
        <strain>ATCC 15692 / DSM 22644 / CIP 104116 / JCM 14847 / LMG 12228 / 1C / PRS 101 / PAO1</strain>
    </source>
</reference>
<reference key="2">
    <citation type="journal article" date="2000" name="Nature">
        <title>Complete genome sequence of Pseudomonas aeruginosa PAO1, an opportunistic pathogen.</title>
        <authorList>
            <person name="Stover C.K."/>
            <person name="Pham X.-Q.T."/>
            <person name="Erwin A.L."/>
            <person name="Mizoguchi S.D."/>
            <person name="Warrener P."/>
            <person name="Hickey M.J."/>
            <person name="Brinkman F.S.L."/>
            <person name="Hufnagle W.O."/>
            <person name="Kowalik D.J."/>
            <person name="Lagrou M."/>
            <person name="Garber R.L."/>
            <person name="Goltry L."/>
            <person name="Tolentino E."/>
            <person name="Westbrock-Wadman S."/>
            <person name="Yuan Y."/>
            <person name="Brody L.L."/>
            <person name="Coulter S.N."/>
            <person name="Folger K.R."/>
            <person name="Kas A."/>
            <person name="Larbig K."/>
            <person name="Lim R.M."/>
            <person name="Smith K.A."/>
            <person name="Spencer D.H."/>
            <person name="Wong G.K.-S."/>
            <person name="Wu Z."/>
            <person name="Paulsen I.T."/>
            <person name="Reizer J."/>
            <person name="Saier M.H. Jr."/>
            <person name="Hancock R.E.W."/>
            <person name="Lory S."/>
            <person name="Olson M.V."/>
        </authorList>
    </citation>
    <scope>NUCLEOTIDE SEQUENCE [LARGE SCALE GENOMIC DNA]</scope>
    <source>
        <strain>ATCC 15692 / DSM 22644 / CIP 104116 / JCM 14847 / LMG 12228 / 1C / PRS 101 / PAO1</strain>
    </source>
</reference>
<evidence type="ECO:0000255" key="1"/>
<evidence type="ECO:0000255" key="2">
    <source>
        <dbReference type="HAMAP-Rule" id="MF_00399"/>
    </source>
</evidence>
<evidence type="ECO:0000305" key="3"/>
<comment type="function">
    <text evidence="2">Required to facilitate the formation of correct disulfide bonds in some periplasmic proteins and for the assembly of the periplasmic c-type cytochromes. Acts by transferring electrons from cytoplasmic thioredoxin to the periplasm. This transfer involves a cascade of disulfide bond formation and reduction steps.</text>
</comment>
<comment type="catalytic activity">
    <reaction evidence="2">
        <text>[protein]-dithiol + NAD(+) = [protein]-disulfide + NADH + H(+)</text>
        <dbReference type="Rhea" id="RHEA:18749"/>
        <dbReference type="Rhea" id="RHEA-COMP:10593"/>
        <dbReference type="Rhea" id="RHEA-COMP:10594"/>
        <dbReference type="ChEBI" id="CHEBI:15378"/>
        <dbReference type="ChEBI" id="CHEBI:29950"/>
        <dbReference type="ChEBI" id="CHEBI:50058"/>
        <dbReference type="ChEBI" id="CHEBI:57540"/>
        <dbReference type="ChEBI" id="CHEBI:57945"/>
        <dbReference type="EC" id="1.8.1.8"/>
    </reaction>
</comment>
<comment type="catalytic activity">
    <reaction evidence="2">
        <text>[protein]-dithiol + NADP(+) = [protein]-disulfide + NADPH + H(+)</text>
        <dbReference type="Rhea" id="RHEA:18753"/>
        <dbReference type="Rhea" id="RHEA-COMP:10593"/>
        <dbReference type="Rhea" id="RHEA-COMP:10594"/>
        <dbReference type="ChEBI" id="CHEBI:15378"/>
        <dbReference type="ChEBI" id="CHEBI:29950"/>
        <dbReference type="ChEBI" id="CHEBI:50058"/>
        <dbReference type="ChEBI" id="CHEBI:57783"/>
        <dbReference type="ChEBI" id="CHEBI:58349"/>
        <dbReference type="EC" id="1.8.1.8"/>
    </reaction>
</comment>
<comment type="subcellular location">
    <subcellularLocation>
        <location evidence="2">Cell inner membrane</location>
        <topology evidence="2">Multi-pass membrane protein</topology>
    </subcellularLocation>
</comment>
<comment type="similarity">
    <text evidence="2">Belongs to the thioredoxin family. DsbD subfamily.</text>
</comment>
<name>DSBD1_PSEAE</name>
<organism>
    <name type="scientific">Pseudomonas aeruginosa (strain ATCC 15692 / DSM 22644 / CIP 104116 / JCM 14847 / LMG 12228 / 1C / PRS 101 / PAO1)</name>
    <dbReference type="NCBI Taxonomy" id="208964"/>
    <lineage>
        <taxon>Bacteria</taxon>
        <taxon>Pseudomonadati</taxon>
        <taxon>Pseudomonadota</taxon>
        <taxon>Gammaproteobacteria</taxon>
        <taxon>Pseudomonadales</taxon>
        <taxon>Pseudomonadaceae</taxon>
        <taxon>Pseudomonas</taxon>
    </lineage>
</organism>
<sequence length="591" mass="62907">MRRLLTLILLLVALPAGAGLFDSRPGASLGGGLDGGGFLKVDQAFKPSVERSDAQHVLLRFVNAEGYYLYRHRFQFKVEPAQVSLGQVQLPAGKQHHDEYFGDTEVYYNIVDLEIPLNNPARQPYTLVVTYQGCADKGLCYPPETRRFDIDGGAATPAASDAAGKGPLEHKGKRSLLFFFLAGLTLTFTPCVLPMLPILSGVVLRGRPGGGRGFVLSLAYVLPMALCFALLGALMGMFGASLNLQAQLQSPWVLVPFAAFFALFAVAMFGFFELRLPGFIREPLDRLAGDARGGSILGAATLGVLSSLLVSPCVSAPLAASLLYISASGDAWGGGLQLFALGLGMGTPLVVFGAGGGALLPKSGAWMNGVRNAFGVLLLAVAVWLLERVVSGPVALMLWGMLAGGAGLALGALEFTPKSAARRLLQLLGLMFLTYAVAAWIGALQGESDPIHPLGRSVPSIHAGPPSTPGEWQNLTTPAQLDAALAEARQAGKPVLLDWYADWCISCKVIERQVLTDPTVQARLPAYRLLRFDITESNPAQRGLLDRYNLFGPPAILFFAPGGDEWSDLRVIGEIDAAGLAERLRRAATRQ</sequence>
<proteinExistence type="inferred from homology"/>
<keyword id="KW-0997">Cell inner membrane</keyword>
<keyword id="KW-1003">Cell membrane</keyword>
<keyword id="KW-0201">Cytochrome c-type biogenesis</keyword>
<keyword id="KW-1015">Disulfide bond</keyword>
<keyword id="KW-0249">Electron transport</keyword>
<keyword id="KW-0472">Membrane</keyword>
<keyword id="KW-0520">NAD</keyword>
<keyword id="KW-0560">Oxidoreductase</keyword>
<keyword id="KW-0676">Redox-active center</keyword>
<keyword id="KW-1185">Reference proteome</keyword>
<keyword id="KW-0732">Signal</keyword>
<keyword id="KW-0812">Transmembrane</keyword>
<keyword id="KW-1133">Transmembrane helix</keyword>
<keyword id="KW-0813">Transport</keyword>